<dbReference type="EMBL" id="CP000141">
    <property type="protein sequence ID" value="ABB14587.1"/>
    <property type="molecule type" value="Genomic_DNA"/>
</dbReference>
<dbReference type="SMR" id="Q3A941"/>
<dbReference type="FunCoup" id="Q3A941">
    <property type="interactions" value="352"/>
</dbReference>
<dbReference type="STRING" id="246194.CHY_2550"/>
<dbReference type="KEGG" id="chy:CHY_2550"/>
<dbReference type="eggNOG" id="COG0636">
    <property type="taxonomic scope" value="Bacteria"/>
</dbReference>
<dbReference type="HOGENOM" id="CLU_148047_1_1_9"/>
<dbReference type="InParanoid" id="Q3A941"/>
<dbReference type="Proteomes" id="UP000002706">
    <property type="component" value="Chromosome"/>
</dbReference>
<dbReference type="GO" id="GO:0005886">
    <property type="term" value="C:plasma membrane"/>
    <property type="evidence" value="ECO:0007669"/>
    <property type="project" value="UniProtKB-SubCell"/>
</dbReference>
<dbReference type="GO" id="GO:0045259">
    <property type="term" value="C:proton-transporting ATP synthase complex"/>
    <property type="evidence" value="ECO:0007669"/>
    <property type="project" value="UniProtKB-KW"/>
</dbReference>
<dbReference type="GO" id="GO:0033177">
    <property type="term" value="C:proton-transporting two-sector ATPase complex, proton-transporting domain"/>
    <property type="evidence" value="ECO:0007669"/>
    <property type="project" value="InterPro"/>
</dbReference>
<dbReference type="GO" id="GO:0008289">
    <property type="term" value="F:lipid binding"/>
    <property type="evidence" value="ECO:0007669"/>
    <property type="project" value="UniProtKB-KW"/>
</dbReference>
<dbReference type="GO" id="GO:0046933">
    <property type="term" value="F:proton-transporting ATP synthase activity, rotational mechanism"/>
    <property type="evidence" value="ECO:0007669"/>
    <property type="project" value="UniProtKB-UniRule"/>
</dbReference>
<dbReference type="CDD" id="cd18121">
    <property type="entry name" value="ATP-synt_Fo_c"/>
    <property type="match status" value="1"/>
</dbReference>
<dbReference type="FunFam" id="1.20.20.10:FF:000004">
    <property type="entry name" value="ATP synthase subunit c"/>
    <property type="match status" value="1"/>
</dbReference>
<dbReference type="Gene3D" id="1.20.20.10">
    <property type="entry name" value="F1F0 ATP synthase subunit C"/>
    <property type="match status" value="1"/>
</dbReference>
<dbReference type="HAMAP" id="MF_01396">
    <property type="entry name" value="ATP_synth_c_bact"/>
    <property type="match status" value="1"/>
</dbReference>
<dbReference type="InterPro" id="IPR005953">
    <property type="entry name" value="ATP_synth_csu_bac/chlpt"/>
</dbReference>
<dbReference type="InterPro" id="IPR000454">
    <property type="entry name" value="ATP_synth_F0_csu"/>
</dbReference>
<dbReference type="InterPro" id="IPR020537">
    <property type="entry name" value="ATP_synth_F0_csu_DDCD_BS"/>
</dbReference>
<dbReference type="InterPro" id="IPR038662">
    <property type="entry name" value="ATP_synth_F0_csu_sf"/>
</dbReference>
<dbReference type="InterPro" id="IPR002379">
    <property type="entry name" value="ATPase_proteolipid_c-like_dom"/>
</dbReference>
<dbReference type="InterPro" id="IPR035921">
    <property type="entry name" value="F/V-ATP_Csub_sf"/>
</dbReference>
<dbReference type="NCBIfam" id="TIGR01260">
    <property type="entry name" value="ATP_synt_c"/>
    <property type="match status" value="1"/>
</dbReference>
<dbReference type="Pfam" id="PF00137">
    <property type="entry name" value="ATP-synt_C"/>
    <property type="match status" value="1"/>
</dbReference>
<dbReference type="PRINTS" id="PR00124">
    <property type="entry name" value="ATPASEC"/>
</dbReference>
<dbReference type="SUPFAM" id="SSF81333">
    <property type="entry name" value="F1F0 ATP synthase subunit C"/>
    <property type="match status" value="1"/>
</dbReference>
<dbReference type="PROSITE" id="PS00605">
    <property type="entry name" value="ATPASE_C"/>
    <property type="match status" value="1"/>
</dbReference>
<gene>
    <name evidence="1" type="primary">atpE</name>
    <name type="ordered locus">CHY_2550</name>
</gene>
<name>ATPL_CARHZ</name>
<proteinExistence type="inferred from homology"/>
<sequence>MDFTMSLVAGLIAIGAGIAVGFGAIGSGIGQGIAAGKAFEAMARQPEVRGTVQTFLIIALAFMETLTIYGLVIAFMLLNKMS</sequence>
<reference key="1">
    <citation type="journal article" date="2005" name="PLoS Genet.">
        <title>Life in hot carbon monoxide: the complete genome sequence of Carboxydothermus hydrogenoformans Z-2901.</title>
        <authorList>
            <person name="Wu M."/>
            <person name="Ren Q."/>
            <person name="Durkin A.S."/>
            <person name="Daugherty S.C."/>
            <person name="Brinkac L.M."/>
            <person name="Dodson R.J."/>
            <person name="Madupu R."/>
            <person name="Sullivan S.A."/>
            <person name="Kolonay J.F."/>
            <person name="Nelson W.C."/>
            <person name="Tallon L.J."/>
            <person name="Jones K.M."/>
            <person name="Ulrich L.E."/>
            <person name="Gonzalez J.M."/>
            <person name="Zhulin I.B."/>
            <person name="Robb F.T."/>
            <person name="Eisen J.A."/>
        </authorList>
    </citation>
    <scope>NUCLEOTIDE SEQUENCE [LARGE SCALE GENOMIC DNA]</scope>
    <source>
        <strain>ATCC BAA-161 / DSM 6008 / Z-2901</strain>
    </source>
</reference>
<accession>Q3A941</accession>
<evidence type="ECO:0000255" key="1">
    <source>
        <dbReference type="HAMAP-Rule" id="MF_01396"/>
    </source>
</evidence>
<keyword id="KW-0066">ATP synthesis</keyword>
<keyword id="KW-1003">Cell membrane</keyword>
<keyword id="KW-0138">CF(0)</keyword>
<keyword id="KW-0375">Hydrogen ion transport</keyword>
<keyword id="KW-0406">Ion transport</keyword>
<keyword id="KW-0446">Lipid-binding</keyword>
<keyword id="KW-0472">Membrane</keyword>
<keyword id="KW-1185">Reference proteome</keyword>
<keyword id="KW-0812">Transmembrane</keyword>
<keyword id="KW-1133">Transmembrane helix</keyword>
<keyword id="KW-0813">Transport</keyword>
<organism>
    <name type="scientific">Carboxydothermus hydrogenoformans (strain ATCC BAA-161 / DSM 6008 / Z-2901)</name>
    <dbReference type="NCBI Taxonomy" id="246194"/>
    <lineage>
        <taxon>Bacteria</taxon>
        <taxon>Bacillati</taxon>
        <taxon>Bacillota</taxon>
        <taxon>Clostridia</taxon>
        <taxon>Thermoanaerobacterales</taxon>
        <taxon>Thermoanaerobacteraceae</taxon>
        <taxon>Carboxydothermus</taxon>
    </lineage>
</organism>
<comment type="function">
    <text evidence="1">F(1)F(0) ATP synthase produces ATP from ADP in the presence of a proton or sodium gradient. F-type ATPases consist of two structural domains, F(1) containing the extramembraneous catalytic core and F(0) containing the membrane proton channel, linked together by a central stalk and a peripheral stalk. During catalysis, ATP synthesis in the catalytic domain of F(1) is coupled via a rotary mechanism of the central stalk subunits to proton translocation.</text>
</comment>
<comment type="function">
    <text evidence="1">Key component of the F(0) channel; it plays a direct role in translocation across the membrane. A homomeric c-ring of between 10-14 subunits forms the central stalk rotor element with the F(1) delta and epsilon subunits.</text>
</comment>
<comment type="subunit">
    <text evidence="1">F-type ATPases have 2 components, F(1) - the catalytic core - and F(0) - the membrane proton channel. F(1) has five subunits: alpha(3), beta(3), gamma(1), delta(1), epsilon(1). F(0) has three main subunits: a(1), b(2) and c(10-14). The alpha and beta chains form an alternating ring which encloses part of the gamma chain. F(1) is attached to F(0) by a central stalk formed by the gamma and epsilon chains, while a peripheral stalk is formed by the delta and b chains.</text>
</comment>
<comment type="subcellular location">
    <subcellularLocation>
        <location evidence="1">Cell membrane</location>
        <topology evidence="1">Multi-pass membrane protein</topology>
    </subcellularLocation>
</comment>
<comment type="similarity">
    <text evidence="1">Belongs to the ATPase C chain family.</text>
</comment>
<protein>
    <recommendedName>
        <fullName evidence="1">ATP synthase subunit c</fullName>
    </recommendedName>
    <alternativeName>
        <fullName evidence="1">ATP synthase F(0) sector subunit c</fullName>
    </alternativeName>
    <alternativeName>
        <fullName evidence="1">F-type ATPase subunit c</fullName>
        <shortName evidence="1">F-ATPase subunit c</shortName>
    </alternativeName>
    <alternativeName>
        <fullName evidence="1">Lipid-binding protein</fullName>
    </alternativeName>
</protein>
<feature type="chain" id="PRO_0000365863" description="ATP synthase subunit c">
    <location>
        <begin position="1"/>
        <end position="82"/>
    </location>
</feature>
<feature type="transmembrane region" description="Helical" evidence="1">
    <location>
        <begin position="5"/>
        <end position="25"/>
    </location>
</feature>
<feature type="transmembrane region" description="Helical" evidence="1">
    <location>
        <begin position="55"/>
        <end position="75"/>
    </location>
</feature>
<feature type="site" description="Reversibly protonated during proton transport" evidence="1">
    <location>
        <position position="64"/>
    </location>
</feature>